<comment type="function">
    <text evidence="3">Possesses single-stranded DNA-stimulated ATPase and ATP-dependent DNA helicase (5' to 3') activity; hexamerization is thought to be critical for ATP hydrolysis and adjacent subunits in the ring-like structure contribute to the ATPase activity (By similarity). Component of the NuA4 histone acetyltransferase complex which is involved in transcriptional activation of select genes principally by acetylation of nucleosomal histones H4 and H2A (By similarity). This modification may both alter nucleosome-DNA interactions and promote interaction of the modified histones with other proteins which positively regulate transcription (By similarity). This complex may be required for the activation of transcriptional programs associated with oncogene and proto-oncogene mediated growth induction, tumor suppressor mediated growth arrest and replicative senescence, apoptosis, and DNA repair (By similarity). The NuA4 complex ATPase and helicase activities seem to be, at least in part, contributed by the association of RUVBL1 and RUVBL2 with EP400 (By similarity). NuA4 may also play a direct role in DNA repair when recruited to sites of DNA damage (By similarity). Component of a SWR1-like complex that specifically mediates the removal of histone H2A.Z/H2AZ1 from the nucleosome (By similarity). Proposed core component of the chromatin remodeling INO80 complex which exhibits DNA- and nucleosome-activated ATPase activity and catalyzes ATP-dependent nucleosome sliding (By similarity). Plays an essential role in oncogenic transformation by MYC and also modulates transcriptional activation by the LEF1/TCF1-CTNNB1 complex (By similarity). May also inhibit the transcriptional activity of ATF2 (By similarity). Involved in the endoplasmic reticulum (ER)-associated degradation (ERAD) pathway where it negatively regulates expression of ER stress response genes (By similarity). May play a role in regulating the composition of the U5 snRNP complex (By similarity).</text>
</comment>
<comment type="catalytic activity">
    <reaction evidence="3">
        <text>ATP + H2O = ADP + phosphate + H(+)</text>
        <dbReference type="Rhea" id="RHEA:13065"/>
        <dbReference type="ChEBI" id="CHEBI:15377"/>
        <dbReference type="ChEBI" id="CHEBI:15378"/>
        <dbReference type="ChEBI" id="CHEBI:30616"/>
        <dbReference type="ChEBI" id="CHEBI:43474"/>
        <dbReference type="ChEBI" id="CHEBI:456216"/>
        <dbReference type="EC" id="3.6.4.12"/>
    </reaction>
    <physiologicalReaction direction="left-to-right" evidence="3">
        <dbReference type="Rhea" id="RHEA:13066"/>
    </physiologicalReaction>
</comment>
<comment type="subunit">
    <text evidence="3 4">Forms homohexameric rings (Probable). Can form a dodecamer with RUVBL1 made of two stacked hexameric rings; however, even though RUVBL1 and RUVBL2 are present in equimolar ratio, the oligomeric status of each hexamer is not known. Oligomerization may regulate binding to nucleic acids and conversely, binding to nucleic acids may affect the dodecameric assembly. Interaction of the complex with DHX34 results in conformational changes of the N-terminus of the RUVBL2 subunits, resulting in loss of nucleotide binding ability and ATP hydrolysis of the complex (By similarity). Interacts with the transcriptional activation domain of MYC. Interacts with ATF2. Component of the RNA polymerase II holoenzyme complex. May also act to bridge the LEF1/TCF1-CTNNB1 complex and TBP. Component of the NuA4 histone acetyltransferase complex which contains the catalytic subunit KAT5/TIP60 and the subunits EP400, TRRAP/PAF400, BRD8/SMAP, EPC1, DMAP1/DNMAP1, RUVBL1/TIP49, RUVBL2, ING3, actin, ACTL6A/BAF53A, MORF4L1/MRG15, MORF4L2/MRGX, MRGBP, YEATS4/GAS41, VPS72/YL1 and MEAF6. The NuA4 complex interacts with MYC and the adenovirus E1A protein. RUVBL2 interacts with EP400. Component of a NuA4-related complex which contains EP400, TRRAP/PAF400, SRCAP, BRD8/SMAP, EPC1, DMAP1/DNMAP1, RUVBL1/TIP49, RUVBL2, actin, ACTL6A/BAF53A, VPS72 and YEATS4/GAS41. Interacts with NPAT. Component of the chromatin-remodeling INO80 complex; specifically part of a complex module associated with the helicase ATP-binding and the helicase C-terminal domain of INO80. Component of some MLL1/MLL complex, at least composed of the core components KMT2A/MLL1, ASH2L, HCFC1/HCF1, WDR5 and RBBP5, as well as the facultative components BACC1, CHD8, E2F6, HSP70, INO80C, KANSL1, LAS1L, MAX, MCRS1, MGA, MYST1/MOF, PELP1, PHF20, PRP31, RING2, RUVB1/TIP49A, RUVB2/TIP49B, SENP3, TAF1, TAF4, TAF6, TAF7, TAF9 and TEX10. Interacts with IGHMBP2. Interacts with TELO2. Interacts with HINT1. Component of a SWR1-like complex. Component of the R2TP complex composed at least of RUVBL1, RUVBL2, RPAP3 and PIHD1. Component of the PAQosome complex which is responsible for the biogenesis of several protein complexes and which consists of R2TP complex members RUVBL1, RUVBL2, RPAP3 and PIH1D1, URI complex members PFDN2, PFDN6, PDRG1, UXT and URI1 as well as ASDURF, POLR2E and DNAAF10/WDR92. Interacts with ITFG1. Interacts with ZMYND10. Interacts with WAC; WAC positively regulates MTOR activity by promoting the assembly of the TTT complex composed of TELO2, TTI1 and TTI2 and the RUVBL complex composed of RUVBL1 and RUVBL2 into the TTT-RUVBL complex which leads to the dimerization of the mTORC1 complex and its subsequent activation. Forms a complex with APPL1 and APPL2 (By similarity). Interacts with ZNHIT2 (via HIT-type zinc finger) in the presence of ATP or ADP; shows a stronger interaction in the presence of ADP (By similarity). The RUVBL1/RUVBL2 complex interacts with ZNHIT1 (via HIT-type zinc finger), ZNHIT3 (via HIT-type zinc finger), ZNHIT6 (via HIT-type zinc finger) and DDX59/ZNHIT5 (via HIT-type zinc finger) in the presence of ADP (By similarity). Interacts with NOPCHAP1; the interaction is direct and disrupted upon ATP binding (By similarity). Interacts with SMG1 (By similarity).</text>
</comment>
<comment type="interaction">
    <interactant intactId="EBI-2549911">
        <id>Q9WTM5</id>
    </interactant>
    <interactant intactId="EBI-1634999">
        <id>P60122</id>
        <label>Ruvbl1</label>
    </interactant>
    <organismsDiffer>false</organismsDiffer>
    <experiments>3</experiments>
</comment>
<comment type="subcellular location">
    <subcellularLocation>
        <location evidence="3">Nucleus matrix</location>
    </subcellularLocation>
    <subcellularLocation>
        <location evidence="3">Nucleus</location>
        <location evidence="3">Nucleoplasm</location>
    </subcellularLocation>
    <subcellularLocation>
        <location evidence="3">Cytoplasm</location>
    </subcellularLocation>
    <subcellularLocation>
        <location evidence="3">Membrane</location>
    </subcellularLocation>
    <subcellularLocation>
        <location evidence="2">Dynein axonemal particle</location>
    </subcellularLocation>
    <text evidence="3">Mainly localized in the nucleus, associated with nuclear matrix or in the nuclear cytosol. Although it is also present in the cytoplasm and associated with the cell membranes.</text>
</comment>
<comment type="similarity">
    <text evidence="4">Belongs to the RuvB family.</text>
</comment>
<proteinExistence type="evidence at protein level"/>
<gene>
    <name type="primary">Ruvbl2</name>
</gene>
<protein>
    <recommendedName>
        <fullName>RuvB-like 2</fullName>
        <ecNumber evidence="3">3.6.4.12</ecNumber>
    </recommendedName>
    <alternativeName>
        <fullName>p47 protein</fullName>
    </alternativeName>
</protein>
<name>RUVB2_MOUSE</name>
<reference key="1">
    <citation type="journal article" date="1999" name="J. Biochem.">
        <title>Molecular cloning of mouse p47, a second group mammalian RuvB DNA helicase-like protein: homology with those from human and Saccharomyces cerevisiae.</title>
        <authorList>
            <person name="Gohshi T."/>
            <person name="Simada M."/>
            <person name="Kawahire S."/>
            <person name="Imai N."/>
            <person name="Ichimura T."/>
            <person name="Omata S."/>
            <person name="Horigome T."/>
        </authorList>
    </citation>
    <scope>NUCLEOTIDE SEQUENCE [MRNA]</scope>
    <source>
        <tissue>Liver</tissue>
    </source>
</reference>
<reference key="2">
    <citation type="journal article" date="2010" name="Cell">
        <title>A tissue-specific atlas of mouse protein phosphorylation and expression.</title>
        <authorList>
            <person name="Huttlin E.L."/>
            <person name="Jedrychowski M.P."/>
            <person name="Elias J.E."/>
            <person name="Goswami T."/>
            <person name="Rad R."/>
            <person name="Beausoleil S.A."/>
            <person name="Villen J."/>
            <person name="Haas W."/>
            <person name="Sowa M.E."/>
            <person name="Gygi S.P."/>
        </authorList>
    </citation>
    <scope>IDENTIFICATION BY MASS SPECTROMETRY [LARGE SCALE ANALYSIS]</scope>
    <source>
        <tissue>Brain</tissue>
        <tissue>Brown adipose tissue</tissue>
        <tissue>Heart</tissue>
        <tissue>Kidney</tissue>
        <tissue>Liver</tissue>
        <tissue>Lung</tissue>
        <tissue>Pancreas</tissue>
        <tissue>Spleen</tissue>
        <tissue>Testis</tissue>
    </source>
</reference>
<evidence type="ECO:0000250" key="1"/>
<evidence type="ECO:0000250" key="2">
    <source>
        <dbReference type="UniProtKB" id="Q9DE27"/>
    </source>
</evidence>
<evidence type="ECO:0000250" key="3">
    <source>
        <dbReference type="UniProtKB" id="Q9Y230"/>
    </source>
</evidence>
<evidence type="ECO:0000305" key="4"/>
<organism>
    <name type="scientific">Mus musculus</name>
    <name type="common">Mouse</name>
    <dbReference type="NCBI Taxonomy" id="10090"/>
    <lineage>
        <taxon>Eukaryota</taxon>
        <taxon>Metazoa</taxon>
        <taxon>Chordata</taxon>
        <taxon>Craniata</taxon>
        <taxon>Vertebrata</taxon>
        <taxon>Euteleostomi</taxon>
        <taxon>Mammalia</taxon>
        <taxon>Eutheria</taxon>
        <taxon>Euarchontoglires</taxon>
        <taxon>Glires</taxon>
        <taxon>Rodentia</taxon>
        <taxon>Myomorpha</taxon>
        <taxon>Muroidea</taxon>
        <taxon>Muridae</taxon>
        <taxon>Murinae</taxon>
        <taxon>Mus</taxon>
        <taxon>Mus</taxon>
    </lineage>
</organism>
<accession>Q9WTM5</accession>
<dbReference type="EC" id="3.6.4.12" evidence="3"/>
<dbReference type="EMBL" id="AB013912">
    <property type="protein sequence ID" value="BAA76297.1"/>
    <property type="molecule type" value="mRNA"/>
</dbReference>
<dbReference type="CCDS" id="CCDS21243.1"/>
<dbReference type="RefSeq" id="NP_001404172.1">
    <property type="nucleotide sequence ID" value="NM_001417243.1"/>
</dbReference>
<dbReference type="RefSeq" id="NP_001404173.1">
    <property type="nucleotide sequence ID" value="NM_001417244.1"/>
</dbReference>
<dbReference type="RefSeq" id="NP_035434.1">
    <property type="nucleotide sequence ID" value="NM_011304.4"/>
</dbReference>
<dbReference type="RefSeq" id="XP_006540785.1">
    <property type="nucleotide sequence ID" value="XM_006540722.1"/>
</dbReference>
<dbReference type="RefSeq" id="XP_006540786.1">
    <property type="nucleotide sequence ID" value="XM_006540723.3"/>
</dbReference>
<dbReference type="SMR" id="Q9WTM5"/>
<dbReference type="BioGRID" id="203037">
    <property type="interactions" value="101"/>
</dbReference>
<dbReference type="ComplexPortal" id="CPX-878">
    <property type="entry name" value="INO80 chromatin remodeling complex"/>
</dbReference>
<dbReference type="ComplexPortal" id="CPX-976">
    <property type="entry name" value="SRCAP chromatin remodeling complex"/>
</dbReference>
<dbReference type="ComplexPortal" id="CPX-990">
    <property type="entry name" value="NuA4 histone acetyltransferase complex"/>
</dbReference>
<dbReference type="FunCoup" id="Q9WTM5">
    <property type="interactions" value="3101"/>
</dbReference>
<dbReference type="IntAct" id="Q9WTM5">
    <property type="interactions" value="71"/>
</dbReference>
<dbReference type="MINT" id="Q9WTM5"/>
<dbReference type="STRING" id="10090.ENSMUSP00000147502"/>
<dbReference type="GlyGen" id="Q9WTM5">
    <property type="glycosylation" value="1 site, 1 O-linked glycan (1 site)"/>
</dbReference>
<dbReference type="iPTMnet" id="Q9WTM5"/>
<dbReference type="PhosphoSitePlus" id="Q9WTM5"/>
<dbReference type="SwissPalm" id="Q9WTM5"/>
<dbReference type="REPRODUCTION-2DPAGE" id="Q9WTM5"/>
<dbReference type="jPOST" id="Q9WTM5"/>
<dbReference type="PaxDb" id="10090-ENSMUSP00000103400"/>
<dbReference type="ProteomicsDB" id="256663"/>
<dbReference type="Pumba" id="Q9WTM5"/>
<dbReference type="Antibodypedia" id="3244">
    <property type="antibodies" value="430 antibodies from 36 providers"/>
</dbReference>
<dbReference type="DNASU" id="20174"/>
<dbReference type="Ensembl" id="ENSMUST00000107771.12">
    <property type="protein sequence ID" value="ENSMUSP00000103400.4"/>
    <property type="gene ID" value="ENSMUSG00000003868.15"/>
</dbReference>
<dbReference type="Ensembl" id="ENSMUST00000211214.2">
    <property type="protein sequence ID" value="ENSMUSP00000147502.2"/>
    <property type="gene ID" value="ENSMUSG00000003868.15"/>
</dbReference>
<dbReference type="GeneID" id="20174"/>
<dbReference type="KEGG" id="mmu:20174"/>
<dbReference type="UCSC" id="uc009gvc.1">
    <property type="organism name" value="mouse"/>
</dbReference>
<dbReference type="AGR" id="MGI:1342299"/>
<dbReference type="CTD" id="10856"/>
<dbReference type="MGI" id="MGI:1342299">
    <property type="gene designation" value="Ruvbl2"/>
</dbReference>
<dbReference type="VEuPathDB" id="HostDB:ENSMUSG00000003868"/>
<dbReference type="eggNOG" id="KOG2680">
    <property type="taxonomic scope" value="Eukaryota"/>
</dbReference>
<dbReference type="GeneTree" id="ENSGT00940000153556"/>
<dbReference type="HOGENOM" id="CLU_028311_4_0_1"/>
<dbReference type="InParanoid" id="Q9WTM5"/>
<dbReference type="OMA" id="IINTEPY"/>
<dbReference type="OrthoDB" id="10060499at2759"/>
<dbReference type="PhylomeDB" id="Q9WTM5"/>
<dbReference type="TreeFam" id="TF300469"/>
<dbReference type="BioGRID-ORCS" id="20174">
    <property type="hits" value="44 hits in 115 CRISPR screens"/>
</dbReference>
<dbReference type="ChiTaRS" id="Ruvbl2">
    <property type="organism name" value="mouse"/>
</dbReference>
<dbReference type="PRO" id="PR:Q9WTM5"/>
<dbReference type="Proteomes" id="UP000000589">
    <property type="component" value="Chromosome 7"/>
</dbReference>
<dbReference type="RNAct" id="Q9WTM5">
    <property type="molecule type" value="protein"/>
</dbReference>
<dbReference type="Bgee" id="ENSMUSG00000003868">
    <property type="expression patterns" value="Expressed in epiblast (generic) and 246 other cell types or tissues"/>
</dbReference>
<dbReference type="ExpressionAtlas" id="Q9WTM5">
    <property type="expression patterns" value="baseline and differential"/>
</dbReference>
<dbReference type="GO" id="GO:0005813">
    <property type="term" value="C:centrosome"/>
    <property type="evidence" value="ECO:0007669"/>
    <property type="project" value="Ensembl"/>
</dbReference>
<dbReference type="GO" id="GO:0036064">
    <property type="term" value="C:ciliary basal body"/>
    <property type="evidence" value="ECO:0007669"/>
    <property type="project" value="Ensembl"/>
</dbReference>
<dbReference type="GO" id="GO:0005737">
    <property type="term" value="C:cytoplasm"/>
    <property type="evidence" value="ECO:0000250"/>
    <property type="project" value="UniProtKB"/>
</dbReference>
<dbReference type="GO" id="GO:0005829">
    <property type="term" value="C:cytosol"/>
    <property type="evidence" value="ECO:0007669"/>
    <property type="project" value="Ensembl"/>
</dbReference>
<dbReference type="GO" id="GO:0120293">
    <property type="term" value="C:dynein axonemal particle"/>
    <property type="evidence" value="ECO:0000250"/>
    <property type="project" value="UniProtKB"/>
</dbReference>
<dbReference type="GO" id="GO:0000791">
    <property type="term" value="C:euchromatin"/>
    <property type="evidence" value="ECO:0007669"/>
    <property type="project" value="Ensembl"/>
</dbReference>
<dbReference type="GO" id="GO:0031011">
    <property type="term" value="C:Ino80 complex"/>
    <property type="evidence" value="ECO:0000266"/>
    <property type="project" value="ComplexPortal"/>
</dbReference>
<dbReference type="GO" id="GO:0016020">
    <property type="term" value="C:membrane"/>
    <property type="evidence" value="ECO:0007669"/>
    <property type="project" value="UniProtKB-SubCell"/>
</dbReference>
<dbReference type="GO" id="GO:0071339">
    <property type="term" value="C:MLL1 complex"/>
    <property type="evidence" value="ECO:0000250"/>
    <property type="project" value="UniProtKB"/>
</dbReference>
<dbReference type="GO" id="GO:0035267">
    <property type="term" value="C:NuA4 histone acetyltransferase complex"/>
    <property type="evidence" value="ECO:0000250"/>
    <property type="project" value="UniProtKB"/>
</dbReference>
<dbReference type="GO" id="GO:0016363">
    <property type="term" value="C:nuclear matrix"/>
    <property type="evidence" value="ECO:0007669"/>
    <property type="project" value="UniProtKB-SubCell"/>
</dbReference>
<dbReference type="GO" id="GO:0000786">
    <property type="term" value="C:nucleosome"/>
    <property type="evidence" value="ECO:0000266"/>
    <property type="project" value="ComplexPortal"/>
</dbReference>
<dbReference type="GO" id="GO:0005634">
    <property type="term" value="C:nucleus"/>
    <property type="evidence" value="ECO:0000250"/>
    <property type="project" value="UniProtKB"/>
</dbReference>
<dbReference type="GO" id="GO:0101031">
    <property type="term" value="C:protein folding chaperone complex"/>
    <property type="evidence" value="ECO:0007669"/>
    <property type="project" value="Ensembl"/>
</dbReference>
<dbReference type="GO" id="GO:0097255">
    <property type="term" value="C:R2TP complex"/>
    <property type="evidence" value="ECO:0000250"/>
    <property type="project" value="UniProtKB"/>
</dbReference>
<dbReference type="GO" id="GO:1990904">
    <property type="term" value="C:ribonucleoprotein complex"/>
    <property type="evidence" value="ECO:0000314"/>
    <property type="project" value="MGI"/>
</dbReference>
<dbReference type="GO" id="GO:1990062">
    <property type="term" value="C:RPAP3/R2TP/prefoldin-like complex"/>
    <property type="evidence" value="ECO:0007669"/>
    <property type="project" value="Ensembl"/>
</dbReference>
<dbReference type="GO" id="GO:0000812">
    <property type="term" value="C:Swr1 complex"/>
    <property type="evidence" value="ECO:0000250"/>
    <property type="project" value="UniProtKB"/>
</dbReference>
<dbReference type="GO" id="GO:0043531">
    <property type="term" value="F:ADP binding"/>
    <property type="evidence" value="ECO:0000314"/>
    <property type="project" value="UniProtKB"/>
</dbReference>
<dbReference type="GO" id="GO:0005524">
    <property type="term" value="F:ATP binding"/>
    <property type="evidence" value="ECO:0000314"/>
    <property type="project" value="UniProtKB"/>
</dbReference>
<dbReference type="GO" id="GO:0016887">
    <property type="term" value="F:ATP hydrolysis activity"/>
    <property type="evidence" value="ECO:0000250"/>
    <property type="project" value="UniProtKB"/>
</dbReference>
<dbReference type="GO" id="GO:0051117">
    <property type="term" value="F:ATPase binding"/>
    <property type="evidence" value="ECO:0000353"/>
    <property type="project" value="UniProtKB"/>
</dbReference>
<dbReference type="GO" id="GO:0008013">
    <property type="term" value="F:beta-catenin binding"/>
    <property type="evidence" value="ECO:0007669"/>
    <property type="project" value="Ensembl"/>
</dbReference>
<dbReference type="GO" id="GO:0003678">
    <property type="term" value="F:DNA helicase activity"/>
    <property type="evidence" value="ECO:0007669"/>
    <property type="project" value="Ensembl"/>
</dbReference>
<dbReference type="GO" id="GO:0140585">
    <property type="term" value="F:promoter-enhancer loop anchoring activity"/>
    <property type="evidence" value="ECO:0007669"/>
    <property type="project" value="Ensembl"/>
</dbReference>
<dbReference type="GO" id="GO:0042803">
    <property type="term" value="F:protein homodimerization activity"/>
    <property type="evidence" value="ECO:0000353"/>
    <property type="project" value="UniProtKB"/>
</dbReference>
<dbReference type="GO" id="GO:0000978">
    <property type="term" value="F:RNA polymerase II cis-regulatory region sequence-specific DNA binding"/>
    <property type="evidence" value="ECO:0007669"/>
    <property type="project" value="Ensembl"/>
</dbReference>
<dbReference type="GO" id="GO:0000979">
    <property type="term" value="F:RNA polymerase II core promoter sequence-specific DNA binding"/>
    <property type="evidence" value="ECO:0007669"/>
    <property type="project" value="Ensembl"/>
</dbReference>
<dbReference type="GO" id="GO:0017025">
    <property type="term" value="F:TBP-class protein binding"/>
    <property type="evidence" value="ECO:0007669"/>
    <property type="project" value="Ensembl"/>
</dbReference>
<dbReference type="GO" id="GO:0001094">
    <property type="term" value="F:TFIID-class transcription factor complex binding"/>
    <property type="evidence" value="ECO:0000353"/>
    <property type="project" value="UniProtKB"/>
</dbReference>
<dbReference type="GO" id="GO:0003714">
    <property type="term" value="F:transcription corepressor activity"/>
    <property type="evidence" value="ECO:0007669"/>
    <property type="project" value="Ensembl"/>
</dbReference>
<dbReference type="GO" id="GO:0071392">
    <property type="term" value="P:cellular response to estradiol stimulus"/>
    <property type="evidence" value="ECO:0007669"/>
    <property type="project" value="Ensembl"/>
</dbReference>
<dbReference type="GO" id="GO:0034644">
    <property type="term" value="P:cellular response to UV"/>
    <property type="evidence" value="ECO:0007669"/>
    <property type="project" value="Ensembl"/>
</dbReference>
<dbReference type="GO" id="GO:0006338">
    <property type="term" value="P:chromatin remodeling"/>
    <property type="evidence" value="ECO:0000266"/>
    <property type="project" value="ComplexPortal"/>
</dbReference>
<dbReference type="GO" id="GO:0006310">
    <property type="term" value="P:DNA recombination"/>
    <property type="evidence" value="ECO:0007669"/>
    <property type="project" value="UniProtKB-KW"/>
</dbReference>
<dbReference type="GO" id="GO:0006281">
    <property type="term" value="P:DNA repair"/>
    <property type="evidence" value="ECO:0007669"/>
    <property type="project" value="UniProtKB-KW"/>
</dbReference>
<dbReference type="GO" id="GO:0071169">
    <property type="term" value="P:establishment of protein localization to chromatin"/>
    <property type="evidence" value="ECO:0007669"/>
    <property type="project" value="Ensembl"/>
</dbReference>
<dbReference type="GO" id="GO:0090090">
    <property type="term" value="P:negative regulation of canonical Wnt signaling pathway"/>
    <property type="evidence" value="ECO:0007669"/>
    <property type="project" value="Ensembl"/>
</dbReference>
<dbReference type="GO" id="GO:0045739">
    <property type="term" value="P:positive regulation of DNA repair"/>
    <property type="evidence" value="ECO:0000314"/>
    <property type="project" value="ComplexPortal"/>
</dbReference>
<dbReference type="GO" id="GO:0045893">
    <property type="term" value="P:positive regulation of DNA-templated transcription"/>
    <property type="evidence" value="ECO:0000266"/>
    <property type="project" value="ComplexPortal"/>
</dbReference>
<dbReference type="GO" id="GO:1905168">
    <property type="term" value="P:positive regulation of double-strand break repair via homologous recombination"/>
    <property type="evidence" value="ECO:0000266"/>
    <property type="project" value="ComplexPortal"/>
</dbReference>
<dbReference type="GO" id="GO:1904507">
    <property type="term" value="P:positive regulation of telomere maintenance in response to DNA damage"/>
    <property type="evidence" value="ECO:0000315"/>
    <property type="project" value="ComplexPortal"/>
</dbReference>
<dbReference type="GO" id="GO:0045944">
    <property type="term" value="P:positive regulation of transcription by RNA polymerase II"/>
    <property type="evidence" value="ECO:0007669"/>
    <property type="project" value="Ensembl"/>
</dbReference>
<dbReference type="GO" id="GO:0042981">
    <property type="term" value="P:regulation of apoptotic process"/>
    <property type="evidence" value="ECO:0000303"/>
    <property type="project" value="ComplexPortal"/>
</dbReference>
<dbReference type="GO" id="GO:0051726">
    <property type="term" value="P:regulation of cell cycle"/>
    <property type="evidence" value="ECO:0000266"/>
    <property type="project" value="ComplexPortal"/>
</dbReference>
<dbReference type="GO" id="GO:0033044">
    <property type="term" value="P:regulation of chromosome organization"/>
    <property type="evidence" value="ECO:0000266"/>
    <property type="project" value="ComplexPortal"/>
</dbReference>
<dbReference type="GO" id="GO:0006282">
    <property type="term" value="P:regulation of DNA repair"/>
    <property type="evidence" value="ECO:0000314"/>
    <property type="project" value="ComplexPortal"/>
</dbReference>
<dbReference type="GO" id="GO:0006275">
    <property type="term" value="P:regulation of DNA replication"/>
    <property type="evidence" value="ECO:0000266"/>
    <property type="project" value="ComplexPortal"/>
</dbReference>
<dbReference type="GO" id="GO:0060382">
    <property type="term" value="P:regulation of DNA strand elongation"/>
    <property type="evidence" value="ECO:0000266"/>
    <property type="project" value="ComplexPortal"/>
</dbReference>
<dbReference type="GO" id="GO:0006355">
    <property type="term" value="P:regulation of DNA-templated transcription"/>
    <property type="evidence" value="ECO:0000303"/>
    <property type="project" value="ComplexPortal"/>
</dbReference>
<dbReference type="GO" id="GO:2000779">
    <property type="term" value="P:regulation of double-strand break repair"/>
    <property type="evidence" value="ECO:0000303"/>
    <property type="project" value="ComplexPortal"/>
</dbReference>
<dbReference type="GO" id="GO:0045995">
    <property type="term" value="P:regulation of embryonic development"/>
    <property type="evidence" value="ECO:0000315"/>
    <property type="project" value="ComplexPortal"/>
</dbReference>
<dbReference type="GO" id="GO:0000723">
    <property type="term" value="P:telomere maintenance"/>
    <property type="evidence" value="ECO:0000315"/>
    <property type="project" value="ComplexPortal"/>
</dbReference>
<dbReference type="FunFam" id="3.40.50.300:FF:002221">
    <property type="entry name" value="RuvB-like 2"/>
    <property type="match status" value="2"/>
</dbReference>
<dbReference type="FunFam" id="1.10.8.60:FF:000010">
    <property type="entry name" value="RuvB-like helicase"/>
    <property type="match status" value="1"/>
</dbReference>
<dbReference type="FunFam" id="2.40.50.360:FF:000002">
    <property type="entry name" value="RuvB-like helicase"/>
    <property type="match status" value="1"/>
</dbReference>
<dbReference type="Gene3D" id="1.10.8.60">
    <property type="match status" value="1"/>
</dbReference>
<dbReference type="Gene3D" id="3.40.50.300">
    <property type="entry name" value="P-loop containing nucleotide triphosphate hydrolases"/>
    <property type="match status" value="1"/>
</dbReference>
<dbReference type="Gene3D" id="2.40.50.360">
    <property type="entry name" value="RuvB-like helicase, domain II"/>
    <property type="match status" value="1"/>
</dbReference>
<dbReference type="InterPro" id="IPR003593">
    <property type="entry name" value="AAA+_ATPase"/>
</dbReference>
<dbReference type="InterPro" id="IPR027417">
    <property type="entry name" value="P-loop_NTPase"/>
</dbReference>
<dbReference type="InterPro" id="IPR027238">
    <property type="entry name" value="RuvB-like"/>
</dbReference>
<dbReference type="InterPro" id="IPR041048">
    <property type="entry name" value="RuvB-like_C"/>
</dbReference>
<dbReference type="InterPro" id="IPR042487">
    <property type="entry name" value="RuvBL1/2_DNA/RNA_bd_dom"/>
</dbReference>
<dbReference type="InterPro" id="IPR010339">
    <property type="entry name" value="TIP49_P-loop"/>
</dbReference>
<dbReference type="PANTHER" id="PTHR11093">
    <property type="entry name" value="RUVB-RELATED REPTIN AND PONTIN"/>
    <property type="match status" value="1"/>
</dbReference>
<dbReference type="Pfam" id="PF06068">
    <property type="entry name" value="TIP49"/>
    <property type="match status" value="1"/>
</dbReference>
<dbReference type="Pfam" id="PF17856">
    <property type="entry name" value="TIP49_C"/>
    <property type="match status" value="1"/>
</dbReference>
<dbReference type="PRINTS" id="PR01874">
    <property type="entry name" value="DNAREPAIRADA"/>
</dbReference>
<dbReference type="SMART" id="SM00382">
    <property type="entry name" value="AAA"/>
    <property type="match status" value="1"/>
</dbReference>
<dbReference type="SUPFAM" id="SSF52540">
    <property type="entry name" value="P-loop containing nucleoside triphosphate hydrolases"/>
    <property type="match status" value="1"/>
</dbReference>
<feature type="initiator methionine" description="Removed" evidence="3">
    <location>
        <position position="1"/>
    </location>
</feature>
<feature type="chain" id="PRO_0000165645" description="RuvB-like 2">
    <location>
        <begin position="2"/>
        <end position="463"/>
    </location>
</feature>
<feature type="binding site" evidence="1">
    <location>
        <begin position="77"/>
        <end position="84"/>
    </location>
    <ligand>
        <name>ATP</name>
        <dbReference type="ChEBI" id="CHEBI:30616"/>
    </ligand>
</feature>
<feature type="modified residue" description="N-acetylalanine" evidence="3">
    <location>
        <position position="2"/>
    </location>
</feature>
<feature type="modified residue" description="Phosphoserine" evidence="3">
    <location>
        <position position="437"/>
    </location>
</feature>
<feature type="cross-link" description="Glycyl lysine isopeptide (Lys-Gly) (interchain with G-Cter in SUMO2)" evidence="3">
    <location>
        <position position="9"/>
    </location>
</feature>
<feature type="cross-link" description="Glycyl lysine isopeptide (Lys-Gly) (interchain with G-Cter in SUMO2)" evidence="3">
    <location>
        <position position="444"/>
    </location>
</feature>
<feature type="cross-link" description="Glycyl lysine isopeptide (Lys-Gly) (interchain with G-Cter in SUMO2)" evidence="3">
    <location>
        <position position="456"/>
    </location>
</feature>
<keyword id="KW-0007">Acetylation</keyword>
<keyword id="KW-0010">Activator</keyword>
<keyword id="KW-0067">ATP-binding</keyword>
<keyword id="KW-0156">Chromatin regulator</keyword>
<keyword id="KW-0963">Cytoplasm</keyword>
<keyword id="KW-0227">DNA damage</keyword>
<keyword id="KW-0233">DNA recombination</keyword>
<keyword id="KW-0234">DNA repair</keyword>
<keyword id="KW-0347">Helicase</keyword>
<keyword id="KW-0378">Hydrolase</keyword>
<keyword id="KW-1017">Isopeptide bond</keyword>
<keyword id="KW-0472">Membrane</keyword>
<keyword id="KW-0547">Nucleotide-binding</keyword>
<keyword id="KW-0539">Nucleus</keyword>
<keyword id="KW-0597">Phosphoprotein</keyword>
<keyword id="KW-1185">Reference proteome</keyword>
<keyword id="KW-0804">Transcription</keyword>
<keyword id="KW-0805">Transcription regulation</keyword>
<keyword id="KW-0832">Ubl conjugation</keyword>
<sequence>MATVAATTKVPEIRDVTRIERIGAHSHIRGLGLDDALEPRQASQGMVGQLAARRAAGVVLEMIREGKIAGRAVLIAGQPGTGKTAIAMGMAQALGPDTPFTAIAGSEIFSLEMSKTEALTQAFRRSIGVRIKEETEIIEGEVVEIQIDRPATGTGSKVGKLTLKTTEMETIYDLGTKMIESLTKDKVQAGDVITIDKATGKISKLGRSFTRARDYDAMGSQTKFVQCPDGELQKRKEVVHTVSLHEIDVINSRTQGFLALFSGDTGEIKSEVREQINAKVAEWREEGKAEIIPGVLFIDEVHMLDIESFSFLNRALESDMAPVLIMATNRGITRIRGTSYQSPHGIPIDLLDRLLIVSTSPYSEKDTKQILRIRCEEEDVEMSEDAYTVLTRIGLETSLRYAIQLITAASLVCRKRKGTEVQVDDIKRVYSLFLDESRSTQYMKEYQDAFLFNELKGETMDTS</sequence>